<keyword id="KW-0238">DNA-binding</keyword>
<keyword id="KW-1032">Host cell membrane</keyword>
<keyword id="KW-1035">Host cytoplasm</keyword>
<keyword id="KW-1043">Host membrane</keyword>
<keyword id="KW-1048">Host nucleus</keyword>
<keyword id="KW-0945">Host-virus interaction</keyword>
<keyword id="KW-0472">Membrane</keyword>
<keyword id="KW-1185">Reference proteome</keyword>
<keyword id="KW-0813">Transport</keyword>
<keyword id="KW-0916">Viral movement protein</keyword>
<dbReference type="EMBL" id="D00200">
    <property type="protein sequence ID" value="BAA00133.1"/>
    <property type="molecule type" value="Genomic_DNA"/>
</dbReference>
<dbReference type="RefSeq" id="NP_040768.1">
    <property type="nucleotide sequence ID" value="NC_001438.1"/>
</dbReference>
<dbReference type="GeneID" id="988084"/>
<dbReference type="KEGG" id="vg:988084"/>
<dbReference type="Proteomes" id="UP000008769">
    <property type="component" value="Genome"/>
</dbReference>
<dbReference type="GO" id="GO:0043657">
    <property type="term" value="C:host cell"/>
    <property type="evidence" value="ECO:0007669"/>
    <property type="project" value="InterPro"/>
</dbReference>
<dbReference type="GO" id="GO:0030430">
    <property type="term" value="C:host cell cytoplasm"/>
    <property type="evidence" value="ECO:0007669"/>
    <property type="project" value="UniProtKB-SubCell"/>
</dbReference>
<dbReference type="GO" id="GO:0042025">
    <property type="term" value="C:host cell nucleus"/>
    <property type="evidence" value="ECO:0007669"/>
    <property type="project" value="UniProtKB-SubCell"/>
</dbReference>
<dbReference type="GO" id="GO:0020002">
    <property type="term" value="C:host cell plasma membrane"/>
    <property type="evidence" value="ECO:0007669"/>
    <property type="project" value="UniProtKB-SubCell"/>
</dbReference>
<dbReference type="GO" id="GO:0016020">
    <property type="term" value="C:membrane"/>
    <property type="evidence" value="ECO:0007669"/>
    <property type="project" value="UniProtKB-KW"/>
</dbReference>
<dbReference type="GO" id="GO:0019028">
    <property type="term" value="C:viral capsid"/>
    <property type="evidence" value="ECO:0007669"/>
    <property type="project" value="InterPro"/>
</dbReference>
<dbReference type="GO" id="GO:0003697">
    <property type="term" value="F:single-stranded DNA binding"/>
    <property type="evidence" value="ECO:0007669"/>
    <property type="project" value="InterPro"/>
</dbReference>
<dbReference type="GO" id="GO:0005198">
    <property type="term" value="F:structural molecule activity"/>
    <property type="evidence" value="ECO:0007669"/>
    <property type="project" value="InterPro"/>
</dbReference>
<dbReference type="GO" id="GO:0051027">
    <property type="term" value="P:DNA transport"/>
    <property type="evidence" value="ECO:0007669"/>
    <property type="project" value="InterPro"/>
</dbReference>
<dbReference type="GO" id="GO:0046740">
    <property type="term" value="P:transport of virus in host, cell to cell"/>
    <property type="evidence" value="ECO:0007669"/>
    <property type="project" value="UniProtKB-KW"/>
</dbReference>
<dbReference type="InterPro" id="IPR001530">
    <property type="entry name" value="Gemini_BR1"/>
</dbReference>
<dbReference type="InterPro" id="IPR000263">
    <property type="entry name" value="GV_A/BR1_coat"/>
</dbReference>
<dbReference type="Pfam" id="PF00844">
    <property type="entry name" value="Gemini_coat"/>
    <property type="match status" value="1"/>
</dbReference>
<dbReference type="PRINTS" id="PR00223">
    <property type="entry name" value="GEMCOATARBR1"/>
</dbReference>
<dbReference type="PRINTS" id="PR00225">
    <property type="entry name" value="GEMCOATBR1"/>
</dbReference>
<feature type="chain" id="PRO_0000415533" description="Nuclear shuttle protein">
    <location>
        <begin position="1"/>
        <end position="256"/>
    </location>
</feature>
<feature type="region of interest" description="Interaction with Arabidopsis thaliana NSI protein" evidence="1">
    <location>
        <begin position="150"/>
        <end position="187"/>
    </location>
</feature>
<feature type="short sequence motif" description="Bipartite nuclear localization signal" evidence="1">
    <location>
        <begin position="21"/>
        <end position="42"/>
    </location>
</feature>
<feature type="short sequence motif" description="Nuclear localization signal" evidence="1">
    <location>
        <begin position="81"/>
        <end position="96"/>
    </location>
</feature>
<accession>P0CK42</accession>
<accession>P06000</accession>
<reference key="1">
    <citation type="journal article" date="1987" name="Microbiol. Immunol.">
        <title>Total nucleotide sequences of the infectious cloned DNAs of bean golden mosaic virus.</title>
        <authorList>
            <person name="Morinaga T."/>
            <person name="Ikegami M."/>
            <person name="Shimotohno K."/>
            <person name="Miura K."/>
        </authorList>
    </citation>
    <scope>NUCLEOTIDE SEQUENCE [GENOMIC DNA]</scope>
</reference>
<gene>
    <name type="ORF">BR1</name>
    <name type="ORF">BV1</name>
</gene>
<organismHost>
    <name type="scientific">Macroptilium lathyroides</name>
    <dbReference type="NCBI Taxonomy" id="260885"/>
</organismHost>
<organismHost>
    <name type="scientific">Malvastrum coromandelianum</name>
    <dbReference type="NCBI Taxonomy" id="108453"/>
</organismHost>
<organismHost>
    <name type="scientific">Phaseolus lunatus</name>
    <name type="common">Lima bean</name>
    <name type="synonym">Phaseolus limensis</name>
    <dbReference type="NCBI Taxonomy" id="3884"/>
</organismHost>
<organismHost>
    <name type="scientific">Phaseolus vulgaris</name>
    <name type="common">Kidney bean</name>
    <name type="synonym">French bean</name>
    <dbReference type="NCBI Taxonomy" id="3885"/>
</organismHost>
<name>NSP_BGYMJ</name>
<sequence>MYASKYKRGSSNYQRRGYSRYQGFRRTAIVTRHDGKRRQHQSNKSNEDPKMLVQCIRENQFGPDFVMSHNTAISTFINYPQLGKIEPNRCRSYIKLKRLRFKGTVKIERMHTDVNMDGLSPKIEGVFSIVIVVDRKPHLSPSGCLHTFDELFGARINSHGNLAVMPSLKDRFYIRHLLKRVLSVDKDTTMIDVEGSTLLSNKRYNMWSTFNDFDHDSCNGVYANIAKNALLVYYCWMSDIMSKASTFVSYDLDYVG</sequence>
<organism>
    <name type="scientific">Bean golden yellow mosaic virus (isolate Puerto Rico-Japan)</name>
    <name type="common">BGYMV</name>
    <dbReference type="NCBI Taxonomy" id="222449"/>
    <lineage>
        <taxon>Viruses</taxon>
        <taxon>Monodnaviria</taxon>
        <taxon>Shotokuvirae</taxon>
        <taxon>Cressdnaviricota</taxon>
        <taxon>Repensiviricetes</taxon>
        <taxon>Geplafuvirales</taxon>
        <taxon>Geminiviridae</taxon>
        <taxon>Begomovirus</taxon>
        <taxon>Bean golden yellow mosaic virus</taxon>
    </lineage>
</organism>
<evidence type="ECO:0000250" key="1"/>
<evidence type="ECO:0000305" key="2"/>
<protein>
    <recommendedName>
        <fullName>Nuclear shuttle protein</fullName>
        <shortName>NSP</shortName>
    </recommendedName>
    <alternativeName>
        <fullName>Protein BR1</fullName>
    </alternativeName>
    <alternativeName>
        <fullName>Protein BV1</fullName>
    </alternativeName>
</protein>
<proteinExistence type="inferred from homology"/>
<comment type="function">
    <text evidence="1">Binds to the genomic viral ssDNA, shuttles it into and out of the cell nucleus. Begomoviruses use 2 proteins to transport their DNA from cell to cell. The nuclear shuttle protein (NSP) shuttles it between nucleus and cytoplasm and the movement protein (MP) probably transports the DNA-NSP complex to the cell periphery and facilitates movement across the cell wall (By similarity).</text>
</comment>
<comment type="subunit">
    <text evidence="1">Binds to single-stranded and double-stranded viral DNA. Interacts with the host nuclear shuttle interacting (NSI) protein. This interaction may allow NSP to recruit NSI monomers to the viral genome and thus regulate nuclear export of viral genome by NSP (By similarity).</text>
</comment>
<comment type="subcellular location">
    <subcellularLocation>
        <location evidence="1">Host nucleus</location>
    </subcellularLocation>
    <subcellularLocation>
        <location evidence="1">Host cytoplasm</location>
    </subcellularLocation>
    <subcellularLocation>
        <location evidence="1">Host cell membrane</location>
        <topology evidence="1">Peripheral membrane protein</topology>
        <orientation evidence="1">Cytoplasmic side</orientation>
    </subcellularLocation>
    <text evidence="1">Translocated to the plasma membrane by the movement protein BC1.</text>
</comment>
<comment type="similarity">
    <text evidence="2">Belongs to the begomovirus nuclear shuttle protein family.</text>
</comment>